<evidence type="ECO:0000255" key="1">
    <source>
        <dbReference type="HAMAP-Rule" id="MF_00087"/>
    </source>
</evidence>
<sequence length="416" mass="45245">MIDRLAMIGVNVKTASREHVARLEKEWEKHLDTIGYASRGTVIIATCNRFEVYLDSPSRLVEDLASSIASPGGEGLVRLQGIDAARHLFRVASGLESQIIGDHEVLGQVRRAWLKSREKGFTTPLLDEVFHRALKTGARVRSESAISSGGVGYSSAAVSLAASLLGGGLDGARVGIVGAGMAAVGIARALCTRWRPRVVAVFNRTPERGWEVAGKCRGVESLVLPLDELAKLINELDALFVAIAGSTNILERGRVERGVSPRVIVDISNPPVTPKVAGRVFHMPEVEEEAKRMMEERLRWIPAAEAIIEEELEALLDALSRRRARESSRSVMRALSILAEREYERTLAGLRNGVDPREAVELALNSYTKKVGGALRRLLEEASDRGQLSLEDIEAILVSEFARIAENSGFKNGSTG</sequence>
<reference key="1">
    <citation type="journal article" date="1999" name="DNA Res.">
        <title>Complete genome sequence of an aerobic hyper-thermophilic crenarchaeon, Aeropyrum pernix K1.</title>
        <authorList>
            <person name="Kawarabayasi Y."/>
            <person name="Hino Y."/>
            <person name="Horikawa H."/>
            <person name="Yamazaki S."/>
            <person name="Haikawa Y."/>
            <person name="Jin-no K."/>
            <person name="Takahashi M."/>
            <person name="Sekine M."/>
            <person name="Baba S."/>
            <person name="Ankai A."/>
            <person name="Kosugi H."/>
            <person name="Hosoyama A."/>
            <person name="Fukui S."/>
            <person name="Nagai Y."/>
            <person name="Nishijima K."/>
            <person name="Nakazawa H."/>
            <person name="Takamiya M."/>
            <person name="Masuda S."/>
            <person name="Funahashi T."/>
            <person name="Tanaka T."/>
            <person name="Kudoh Y."/>
            <person name="Yamazaki J."/>
            <person name="Kushida N."/>
            <person name="Oguchi A."/>
            <person name="Aoki K."/>
            <person name="Kubota K."/>
            <person name="Nakamura Y."/>
            <person name="Nomura N."/>
            <person name="Sako Y."/>
            <person name="Kikuchi H."/>
        </authorList>
    </citation>
    <scope>NUCLEOTIDE SEQUENCE [LARGE SCALE GENOMIC DNA]</scope>
    <source>
        <strain>ATCC 700893 / DSM 11879 / JCM 9820 / NBRC 100138 / K1</strain>
    </source>
</reference>
<proteinExistence type="inferred from homology"/>
<organism>
    <name type="scientific">Aeropyrum pernix (strain ATCC 700893 / DSM 11879 / JCM 9820 / NBRC 100138 / K1)</name>
    <dbReference type="NCBI Taxonomy" id="272557"/>
    <lineage>
        <taxon>Archaea</taxon>
        <taxon>Thermoproteota</taxon>
        <taxon>Thermoprotei</taxon>
        <taxon>Desulfurococcales</taxon>
        <taxon>Desulfurococcaceae</taxon>
        <taxon>Aeropyrum</taxon>
    </lineage>
</organism>
<gene>
    <name evidence="1" type="primary">hemA</name>
    <name type="ordered locus">APE_2296</name>
</gene>
<name>HEM1_AERPE</name>
<feature type="chain" id="PRO_0000114097" description="Glutamyl-tRNA reductase">
    <location>
        <begin position="1"/>
        <end position="416"/>
    </location>
</feature>
<feature type="active site" description="Nucleophile" evidence="1">
    <location>
        <position position="47"/>
    </location>
</feature>
<feature type="binding site" evidence="1">
    <location>
        <begin position="46"/>
        <end position="49"/>
    </location>
    <ligand>
        <name>substrate</name>
    </ligand>
</feature>
<feature type="binding site" evidence="1">
    <location>
        <position position="97"/>
    </location>
    <ligand>
        <name>substrate</name>
    </ligand>
</feature>
<feature type="binding site" evidence="1">
    <location>
        <begin position="102"/>
        <end position="104"/>
    </location>
    <ligand>
        <name>substrate</name>
    </ligand>
</feature>
<feature type="binding site" evidence="1">
    <location>
        <position position="108"/>
    </location>
    <ligand>
        <name>substrate</name>
    </ligand>
</feature>
<feature type="binding site" evidence="1">
    <location>
        <begin position="178"/>
        <end position="183"/>
    </location>
    <ligand>
        <name>NADP(+)</name>
        <dbReference type="ChEBI" id="CHEBI:58349"/>
    </ligand>
</feature>
<feature type="site" description="Important for activity" evidence="1">
    <location>
        <position position="87"/>
    </location>
</feature>
<protein>
    <recommendedName>
        <fullName evidence="1">Glutamyl-tRNA reductase</fullName>
        <shortName evidence="1">GluTR</shortName>
        <ecNumber evidence="1">1.2.1.70</ecNumber>
    </recommendedName>
</protein>
<accession>Q9Y9J2</accession>
<dbReference type="EC" id="1.2.1.70" evidence="1"/>
<dbReference type="EMBL" id="BA000002">
    <property type="protein sequence ID" value="BAA81308.1"/>
    <property type="molecule type" value="Genomic_DNA"/>
</dbReference>
<dbReference type="PIR" id="D72456">
    <property type="entry name" value="D72456"/>
</dbReference>
<dbReference type="RefSeq" id="WP_010866921.1">
    <property type="nucleotide sequence ID" value="NC_000854.2"/>
</dbReference>
<dbReference type="SMR" id="Q9Y9J2"/>
<dbReference type="STRING" id="272557.APE_2296"/>
<dbReference type="EnsemblBacteria" id="BAA81308">
    <property type="protein sequence ID" value="BAA81308"/>
    <property type="gene ID" value="APE_2296"/>
</dbReference>
<dbReference type="GeneID" id="1445329"/>
<dbReference type="KEGG" id="ape:APE_2296"/>
<dbReference type="PATRIC" id="fig|272557.25.peg.1531"/>
<dbReference type="eggNOG" id="arCOG01036">
    <property type="taxonomic scope" value="Archaea"/>
</dbReference>
<dbReference type="UniPathway" id="UPA00251">
    <property type="reaction ID" value="UER00316"/>
</dbReference>
<dbReference type="Proteomes" id="UP000002518">
    <property type="component" value="Chromosome"/>
</dbReference>
<dbReference type="GO" id="GO:0008883">
    <property type="term" value="F:glutamyl-tRNA reductase activity"/>
    <property type="evidence" value="ECO:0007669"/>
    <property type="project" value="UniProtKB-UniRule"/>
</dbReference>
<dbReference type="GO" id="GO:0050661">
    <property type="term" value="F:NADP binding"/>
    <property type="evidence" value="ECO:0007669"/>
    <property type="project" value="InterPro"/>
</dbReference>
<dbReference type="GO" id="GO:0019353">
    <property type="term" value="P:protoporphyrinogen IX biosynthetic process from glutamate"/>
    <property type="evidence" value="ECO:0007669"/>
    <property type="project" value="TreeGrafter"/>
</dbReference>
<dbReference type="CDD" id="cd05213">
    <property type="entry name" value="NAD_bind_Glutamyl_tRNA_reduct"/>
    <property type="match status" value="1"/>
</dbReference>
<dbReference type="Gene3D" id="3.30.460.30">
    <property type="entry name" value="Glutamyl-tRNA reductase, N-terminal domain"/>
    <property type="match status" value="1"/>
</dbReference>
<dbReference type="Gene3D" id="3.40.50.720">
    <property type="entry name" value="NAD(P)-binding Rossmann-like Domain"/>
    <property type="match status" value="1"/>
</dbReference>
<dbReference type="HAMAP" id="MF_00087">
    <property type="entry name" value="Glu_tRNA_reductase"/>
    <property type="match status" value="1"/>
</dbReference>
<dbReference type="InterPro" id="IPR000343">
    <property type="entry name" value="4pyrrol_synth_GluRdtase"/>
</dbReference>
<dbReference type="InterPro" id="IPR015896">
    <property type="entry name" value="4pyrrol_synth_GluRdtase_dimer"/>
</dbReference>
<dbReference type="InterPro" id="IPR015895">
    <property type="entry name" value="4pyrrol_synth_GluRdtase_N"/>
</dbReference>
<dbReference type="InterPro" id="IPR018214">
    <property type="entry name" value="GluRdtase_CS"/>
</dbReference>
<dbReference type="InterPro" id="IPR036453">
    <property type="entry name" value="GluRdtase_dimer_dom_sf"/>
</dbReference>
<dbReference type="InterPro" id="IPR036343">
    <property type="entry name" value="GluRdtase_N_sf"/>
</dbReference>
<dbReference type="InterPro" id="IPR036291">
    <property type="entry name" value="NAD(P)-bd_dom_sf"/>
</dbReference>
<dbReference type="InterPro" id="IPR006151">
    <property type="entry name" value="Shikm_DH/Glu-tRNA_Rdtase"/>
</dbReference>
<dbReference type="PANTHER" id="PTHR43013">
    <property type="entry name" value="GLUTAMYL-TRNA REDUCTASE"/>
    <property type="match status" value="1"/>
</dbReference>
<dbReference type="PANTHER" id="PTHR43013:SF1">
    <property type="entry name" value="GLUTAMYL-TRNA REDUCTASE"/>
    <property type="match status" value="1"/>
</dbReference>
<dbReference type="Pfam" id="PF00745">
    <property type="entry name" value="GlutR_dimer"/>
    <property type="match status" value="1"/>
</dbReference>
<dbReference type="Pfam" id="PF05201">
    <property type="entry name" value="GlutR_N"/>
    <property type="match status" value="1"/>
</dbReference>
<dbReference type="Pfam" id="PF01488">
    <property type="entry name" value="Shikimate_DH"/>
    <property type="match status" value="1"/>
</dbReference>
<dbReference type="PIRSF" id="PIRSF000445">
    <property type="entry name" value="4pyrrol_synth_GluRdtase"/>
    <property type="match status" value="1"/>
</dbReference>
<dbReference type="SUPFAM" id="SSF69742">
    <property type="entry name" value="Glutamyl tRNA-reductase catalytic, N-terminal domain"/>
    <property type="match status" value="1"/>
</dbReference>
<dbReference type="SUPFAM" id="SSF69075">
    <property type="entry name" value="Glutamyl tRNA-reductase dimerization domain"/>
    <property type="match status" value="1"/>
</dbReference>
<dbReference type="SUPFAM" id="SSF51735">
    <property type="entry name" value="NAD(P)-binding Rossmann-fold domains"/>
    <property type="match status" value="1"/>
</dbReference>
<dbReference type="PROSITE" id="PS00747">
    <property type="entry name" value="GLUTR"/>
    <property type="match status" value="1"/>
</dbReference>
<comment type="function">
    <text evidence="1">Catalyzes the NADPH-dependent reduction of glutamyl-tRNA(Glu) to glutamate 1-semialdehyde (GSA).</text>
</comment>
<comment type="catalytic activity">
    <reaction evidence="1">
        <text>(S)-4-amino-5-oxopentanoate + tRNA(Glu) + NADP(+) = L-glutamyl-tRNA(Glu) + NADPH + H(+)</text>
        <dbReference type="Rhea" id="RHEA:12344"/>
        <dbReference type="Rhea" id="RHEA-COMP:9663"/>
        <dbReference type="Rhea" id="RHEA-COMP:9680"/>
        <dbReference type="ChEBI" id="CHEBI:15378"/>
        <dbReference type="ChEBI" id="CHEBI:57501"/>
        <dbReference type="ChEBI" id="CHEBI:57783"/>
        <dbReference type="ChEBI" id="CHEBI:58349"/>
        <dbReference type="ChEBI" id="CHEBI:78442"/>
        <dbReference type="ChEBI" id="CHEBI:78520"/>
        <dbReference type="EC" id="1.2.1.70"/>
    </reaction>
</comment>
<comment type="pathway">
    <text evidence="1">Porphyrin-containing compound metabolism; protoporphyrin-IX biosynthesis; 5-aminolevulinate from L-glutamyl-tRNA(Glu): step 1/2.</text>
</comment>
<comment type="subunit">
    <text evidence="1">Homodimer.</text>
</comment>
<comment type="domain">
    <text evidence="1">Possesses an unusual extended V-shaped dimeric structure with each monomer consisting of three distinct domains arranged along a curved 'spinal' alpha-helix. The N-terminal catalytic domain specifically recognizes the glutamate moiety of the substrate. The second domain is the NADPH-binding domain, and the third C-terminal domain is responsible for dimerization.</text>
</comment>
<comment type="miscellaneous">
    <text evidence="1">During catalysis, the active site Cys acts as a nucleophile attacking the alpha-carbonyl group of tRNA-bound glutamate with the formation of a thioester intermediate between enzyme and glutamate, and the concomitant release of tRNA(Glu). The thioester intermediate is finally reduced by direct hydride transfer from NADPH, to form the product GSA.</text>
</comment>
<comment type="similarity">
    <text evidence="1">Belongs to the glutamyl-tRNA reductase family.</text>
</comment>
<keyword id="KW-0521">NADP</keyword>
<keyword id="KW-0560">Oxidoreductase</keyword>
<keyword id="KW-0627">Porphyrin biosynthesis</keyword>
<keyword id="KW-1185">Reference proteome</keyword>